<comment type="function">
    <text evidence="1">The RecF protein is involved in DNA metabolism; it is required for DNA replication and normal SOS inducibility. RecF binds preferentially to single-stranded, linear DNA. It also seems to bind ATP.</text>
</comment>
<comment type="subcellular location">
    <subcellularLocation>
        <location evidence="1">Cytoplasm</location>
    </subcellularLocation>
</comment>
<comment type="similarity">
    <text evidence="1">Belongs to the RecF family.</text>
</comment>
<reference key="1">
    <citation type="journal article" date="2005" name="Nucleic Acids Res.">
        <title>Genome dynamics and diversity of Shigella species, the etiologic agents of bacillary dysentery.</title>
        <authorList>
            <person name="Yang F."/>
            <person name="Yang J."/>
            <person name="Zhang X."/>
            <person name="Chen L."/>
            <person name="Jiang Y."/>
            <person name="Yan Y."/>
            <person name="Tang X."/>
            <person name="Wang J."/>
            <person name="Xiong Z."/>
            <person name="Dong J."/>
            <person name="Xue Y."/>
            <person name="Zhu Y."/>
            <person name="Xu X."/>
            <person name="Sun L."/>
            <person name="Chen S."/>
            <person name="Nie H."/>
            <person name="Peng J."/>
            <person name="Xu J."/>
            <person name="Wang Y."/>
            <person name="Yuan Z."/>
            <person name="Wen Y."/>
            <person name="Yao Z."/>
            <person name="Shen Y."/>
            <person name="Qiang B."/>
            <person name="Hou Y."/>
            <person name="Yu J."/>
            <person name="Jin Q."/>
        </authorList>
    </citation>
    <scope>NUCLEOTIDE SEQUENCE [LARGE SCALE GENOMIC DNA]</scope>
    <source>
        <strain>Ss046</strain>
    </source>
</reference>
<proteinExistence type="inferred from homology"/>
<dbReference type="EMBL" id="CP000038">
    <property type="protein sequence ID" value="AAZ90198.1"/>
    <property type="molecule type" value="Genomic_DNA"/>
</dbReference>
<dbReference type="RefSeq" id="WP_000060112.1">
    <property type="nucleotide sequence ID" value="NC_007384.1"/>
</dbReference>
<dbReference type="SMR" id="Q3YWB4"/>
<dbReference type="GeneID" id="93778441"/>
<dbReference type="KEGG" id="ssn:SSON_3650"/>
<dbReference type="HOGENOM" id="CLU_040267_0_0_6"/>
<dbReference type="Proteomes" id="UP000002529">
    <property type="component" value="Chromosome"/>
</dbReference>
<dbReference type="GO" id="GO:0005737">
    <property type="term" value="C:cytoplasm"/>
    <property type="evidence" value="ECO:0007669"/>
    <property type="project" value="UniProtKB-SubCell"/>
</dbReference>
<dbReference type="GO" id="GO:0005524">
    <property type="term" value="F:ATP binding"/>
    <property type="evidence" value="ECO:0007669"/>
    <property type="project" value="UniProtKB-UniRule"/>
</dbReference>
<dbReference type="GO" id="GO:0003697">
    <property type="term" value="F:single-stranded DNA binding"/>
    <property type="evidence" value="ECO:0007669"/>
    <property type="project" value="UniProtKB-UniRule"/>
</dbReference>
<dbReference type="GO" id="GO:0006260">
    <property type="term" value="P:DNA replication"/>
    <property type="evidence" value="ECO:0007669"/>
    <property type="project" value="UniProtKB-UniRule"/>
</dbReference>
<dbReference type="GO" id="GO:0000731">
    <property type="term" value="P:DNA synthesis involved in DNA repair"/>
    <property type="evidence" value="ECO:0007669"/>
    <property type="project" value="TreeGrafter"/>
</dbReference>
<dbReference type="GO" id="GO:0006302">
    <property type="term" value="P:double-strand break repair"/>
    <property type="evidence" value="ECO:0007669"/>
    <property type="project" value="TreeGrafter"/>
</dbReference>
<dbReference type="GO" id="GO:0009432">
    <property type="term" value="P:SOS response"/>
    <property type="evidence" value="ECO:0007669"/>
    <property type="project" value="UniProtKB-UniRule"/>
</dbReference>
<dbReference type="FunFam" id="1.20.1050.90:FF:000001">
    <property type="entry name" value="DNA replication and repair protein RecF"/>
    <property type="match status" value="1"/>
</dbReference>
<dbReference type="Gene3D" id="3.40.50.300">
    <property type="entry name" value="P-loop containing nucleotide triphosphate hydrolases"/>
    <property type="match status" value="1"/>
</dbReference>
<dbReference type="Gene3D" id="1.20.1050.90">
    <property type="entry name" value="RecF/RecN/SMC, N-terminal domain"/>
    <property type="match status" value="1"/>
</dbReference>
<dbReference type="HAMAP" id="MF_00365">
    <property type="entry name" value="RecF"/>
    <property type="match status" value="1"/>
</dbReference>
<dbReference type="InterPro" id="IPR001238">
    <property type="entry name" value="DNA-binding_RecF"/>
</dbReference>
<dbReference type="InterPro" id="IPR018078">
    <property type="entry name" value="DNA-binding_RecF_CS"/>
</dbReference>
<dbReference type="InterPro" id="IPR027417">
    <property type="entry name" value="P-loop_NTPase"/>
</dbReference>
<dbReference type="InterPro" id="IPR003395">
    <property type="entry name" value="RecF/RecN/SMC_N"/>
</dbReference>
<dbReference type="InterPro" id="IPR042174">
    <property type="entry name" value="RecF_2"/>
</dbReference>
<dbReference type="NCBIfam" id="TIGR00611">
    <property type="entry name" value="recf"/>
    <property type="match status" value="1"/>
</dbReference>
<dbReference type="PANTHER" id="PTHR32182">
    <property type="entry name" value="DNA REPLICATION AND REPAIR PROTEIN RECF"/>
    <property type="match status" value="1"/>
</dbReference>
<dbReference type="PANTHER" id="PTHR32182:SF0">
    <property type="entry name" value="DNA REPLICATION AND REPAIR PROTEIN RECF"/>
    <property type="match status" value="1"/>
</dbReference>
<dbReference type="Pfam" id="PF02463">
    <property type="entry name" value="SMC_N"/>
    <property type="match status" value="1"/>
</dbReference>
<dbReference type="SUPFAM" id="SSF52540">
    <property type="entry name" value="P-loop containing nucleoside triphosphate hydrolases"/>
    <property type="match status" value="1"/>
</dbReference>
<dbReference type="PROSITE" id="PS00617">
    <property type="entry name" value="RECF_1"/>
    <property type="match status" value="1"/>
</dbReference>
<dbReference type="PROSITE" id="PS00618">
    <property type="entry name" value="RECF_2"/>
    <property type="match status" value="1"/>
</dbReference>
<keyword id="KW-0067">ATP-binding</keyword>
<keyword id="KW-0963">Cytoplasm</keyword>
<keyword id="KW-0227">DNA damage</keyword>
<keyword id="KW-0234">DNA repair</keyword>
<keyword id="KW-0235">DNA replication</keyword>
<keyword id="KW-0238">DNA-binding</keyword>
<keyword id="KW-0547">Nucleotide-binding</keyword>
<keyword id="KW-1185">Reference proteome</keyword>
<keyword id="KW-0742">SOS response</keyword>
<name>RECF_SHISS</name>
<organism>
    <name type="scientific">Shigella sonnei (strain Ss046)</name>
    <dbReference type="NCBI Taxonomy" id="300269"/>
    <lineage>
        <taxon>Bacteria</taxon>
        <taxon>Pseudomonadati</taxon>
        <taxon>Pseudomonadota</taxon>
        <taxon>Gammaproteobacteria</taxon>
        <taxon>Enterobacterales</taxon>
        <taxon>Enterobacteriaceae</taxon>
        <taxon>Shigella</taxon>
    </lineage>
</organism>
<gene>
    <name evidence="1" type="primary">recF</name>
    <name type="ordered locus">SSON_3650</name>
</gene>
<feature type="chain" id="PRO_0000236145" description="DNA replication and repair protein RecF">
    <location>
        <begin position="1"/>
        <end position="357"/>
    </location>
</feature>
<feature type="binding site" evidence="1">
    <location>
        <begin position="30"/>
        <end position="37"/>
    </location>
    <ligand>
        <name>ATP</name>
        <dbReference type="ChEBI" id="CHEBI:30616"/>
    </ligand>
</feature>
<protein>
    <recommendedName>
        <fullName evidence="1">DNA replication and repair protein RecF</fullName>
    </recommendedName>
</protein>
<evidence type="ECO:0000255" key="1">
    <source>
        <dbReference type="HAMAP-Rule" id="MF_00365"/>
    </source>
</evidence>
<accession>Q3YWB4</accession>
<sequence length="357" mass="40514">MSLTRLLIRDFRNIETADLALSPGFNFLVGANGSGKTSVLEAIYTLGHGRAFRSLQIGRVIRHEQEAFVLHGRLQGEERETAIGLTKDKQGDSKVRIDGTDGHKVAELAHLMPMQLITPEGFTLLNGGPKYRRAFLDWGCFHNEPGFFTAWSNLKRLLKQRNAALRQVTRYEQLRPWDKELIPLAEQISTWRAEYSAGIAADMADTCKQFLPEFSLTFSFQRGWEKETEYAEVLERNFERDRQLTYTAHGPHKADLRIRADGAPVEDTLSRGQLKLLMCALRLAQGEFLTRESGRRCLYLIDDFASELDDERRGLLASRLKATQSQVFVSAISAEHVIDMSDENSKMFTVEKGKITD</sequence>